<proteinExistence type="evidence at transcript level"/>
<organism>
    <name type="scientific">Macaca fascicularis</name>
    <name type="common">Crab-eating macaque</name>
    <name type="synonym">Cynomolgus monkey</name>
    <dbReference type="NCBI Taxonomy" id="9541"/>
    <lineage>
        <taxon>Eukaryota</taxon>
        <taxon>Metazoa</taxon>
        <taxon>Chordata</taxon>
        <taxon>Craniata</taxon>
        <taxon>Vertebrata</taxon>
        <taxon>Euteleostomi</taxon>
        <taxon>Mammalia</taxon>
        <taxon>Eutheria</taxon>
        <taxon>Euarchontoglires</taxon>
        <taxon>Primates</taxon>
        <taxon>Haplorrhini</taxon>
        <taxon>Catarrhini</taxon>
        <taxon>Cercopithecidae</taxon>
        <taxon>Cercopithecinae</taxon>
        <taxon>Macaca</taxon>
    </lineage>
</organism>
<dbReference type="EMBL" id="AB169378">
    <property type="protein sequence ID" value="BAE01462.1"/>
    <property type="molecule type" value="mRNA"/>
</dbReference>
<dbReference type="RefSeq" id="NP_001270660.1">
    <property type="nucleotide sequence ID" value="NM_001283731.1"/>
</dbReference>
<dbReference type="SMR" id="Q4R613"/>
<dbReference type="STRING" id="9541.ENSMFAP00000011165"/>
<dbReference type="GlyCosmos" id="Q4R613">
    <property type="glycosylation" value="2 sites, No reported glycans"/>
</dbReference>
<dbReference type="eggNOG" id="ENOG502QT1V">
    <property type="taxonomic scope" value="Eukaryota"/>
</dbReference>
<dbReference type="Proteomes" id="UP000233100">
    <property type="component" value="Unplaced"/>
</dbReference>
<dbReference type="GO" id="GO:0030659">
    <property type="term" value="C:cytoplasmic vesicle membrane"/>
    <property type="evidence" value="ECO:0007669"/>
    <property type="project" value="UniProtKB-SubCell"/>
</dbReference>
<dbReference type="GO" id="GO:0005886">
    <property type="term" value="C:plasma membrane"/>
    <property type="evidence" value="ECO:0007669"/>
    <property type="project" value="UniProtKB-SubCell"/>
</dbReference>
<dbReference type="GO" id="GO:0004930">
    <property type="term" value="F:G protein-coupled receptor activity"/>
    <property type="evidence" value="ECO:0007669"/>
    <property type="project" value="UniProtKB-KW"/>
</dbReference>
<dbReference type="GO" id="GO:0007200">
    <property type="term" value="P:phospholipase C-activating G protein-coupled receptor signaling pathway"/>
    <property type="evidence" value="ECO:0007669"/>
    <property type="project" value="TreeGrafter"/>
</dbReference>
<dbReference type="GO" id="GO:0035025">
    <property type="term" value="P:positive regulation of Rho protein signal transduction"/>
    <property type="evidence" value="ECO:0007669"/>
    <property type="project" value="TreeGrafter"/>
</dbReference>
<dbReference type="CDD" id="cd15166">
    <property type="entry name" value="7tmA_NAGly_R_GPR18"/>
    <property type="match status" value="1"/>
</dbReference>
<dbReference type="FunFam" id="1.20.1070.10:FF:000176">
    <property type="entry name" value="N-arachidonyl glycine receptor"/>
    <property type="match status" value="1"/>
</dbReference>
<dbReference type="Gene3D" id="1.20.1070.10">
    <property type="entry name" value="Rhodopsin 7-helix transmembrane proteins"/>
    <property type="match status" value="1"/>
</dbReference>
<dbReference type="InterPro" id="IPR000276">
    <property type="entry name" value="GPCR_Rhodpsn"/>
</dbReference>
<dbReference type="InterPro" id="IPR017452">
    <property type="entry name" value="GPCR_Rhodpsn_7TM"/>
</dbReference>
<dbReference type="InterPro" id="IPR028335">
    <property type="entry name" value="GPR18"/>
</dbReference>
<dbReference type="PANTHER" id="PTHR24232">
    <property type="entry name" value="G-PROTEIN COUPLED RECEPTOR"/>
    <property type="match status" value="1"/>
</dbReference>
<dbReference type="PANTHER" id="PTHR24232:SF1">
    <property type="entry name" value="N-ARACHIDONYL GLYCINE RECEPTOR"/>
    <property type="match status" value="1"/>
</dbReference>
<dbReference type="Pfam" id="PF00001">
    <property type="entry name" value="7tm_1"/>
    <property type="match status" value="1"/>
</dbReference>
<dbReference type="PRINTS" id="PR00237">
    <property type="entry name" value="GPCRRHODOPSN"/>
</dbReference>
<dbReference type="PRINTS" id="PR01157">
    <property type="entry name" value="P2YPURNOCPTR"/>
</dbReference>
<dbReference type="SUPFAM" id="SSF81321">
    <property type="entry name" value="Family A G protein-coupled receptor-like"/>
    <property type="match status" value="1"/>
</dbReference>
<dbReference type="PROSITE" id="PS00237">
    <property type="entry name" value="G_PROTEIN_RECEP_F1_1"/>
    <property type="match status" value="1"/>
</dbReference>
<dbReference type="PROSITE" id="PS50262">
    <property type="entry name" value="G_PROTEIN_RECEP_F1_2"/>
    <property type="match status" value="1"/>
</dbReference>
<name>GPR18_MACFA</name>
<protein>
    <recommendedName>
        <fullName>N-arachidonyl glycine receptor</fullName>
        <shortName>NAGly receptor</shortName>
    </recommendedName>
    <alternativeName>
        <fullName>G-protein coupled receptor 18</fullName>
    </alternativeName>
</protein>
<gene>
    <name evidence="1" type="primary">GPR18</name>
    <name type="ORF">QtsA-19357</name>
</gene>
<keyword id="KW-1003">Cell membrane</keyword>
<keyword id="KW-0968">Cytoplasmic vesicle</keyword>
<keyword id="KW-1015">Disulfide bond</keyword>
<keyword id="KW-0297">G-protein coupled receptor</keyword>
<keyword id="KW-0325">Glycoprotein</keyword>
<keyword id="KW-0472">Membrane</keyword>
<keyword id="KW-0597">Phosphoprotein</keyword>
<keyword id="KW-0675">Receptor</keyword>
<keyword id="KW-1185">Reference proteome</keyword>
<keyword id="KW-0807">Transducer</keyword>
<keyword id="KW-0812">Transmembrane</keyword>
<keyword id="KW-1133">Transmembrane helix</keyword>
<feature type="chain" id="PRO_0000278173" description="N-arachidonyl glycine receptor">
    <location>
        <begin position="1"/>
        <end position="331"/>
    </location>
</feature>
<feature type="topological domain" description="Extracellular" evidence="3">
    <location>
        <begin position="1"/>
        <end position="26"/>
    </location>
</feature>
<feature type="transmembrane region" description="Helical; Name=1" evidence="3">
    <location>
        <begin position="27"/>
        <end position="47"/>
    </location>
</feature>
<feature type="topological domain" description="Cytoplasmic" evidence="3">
    <location>
        <begin position="48"/>
        <end position="56"/>
    </location>
</feature>
<feature type="transmembrane region" description="Helical; Name=2" evidence="3">
    <location>
        <begin position="57"/>
        <end position="77"/>
    </location>
</feature>
<feature type="topological domain" description="Extracellular" evidence="3">
    <location>
        <begin position="78"/>
        <end position="95"/>
    </location>
</feature>
<feature type="transmembrane region" description="Helical; Name=3" evidence="3">
    <location>
        <begin position="96"/>
        <end position="116"/>
    </location>
</feature>
<feature type="topological domain" description="Cytoplasmic" evidence="3">
    <location>
        <begin position="117"/>
        <end position="138"/>
    </location>
</feature>
<feature type="transmembrane region" description="Helical; Name=4" evidence="3">
    <location>
        <begin position="139"/>
        <end position="159"/>
    </location>
</feature>
<feature type="topological domain" description="Extracellular" evidence="3">
    <location>
        <begin position="160"/>
        <end position="191"/>
    </location>
</feature>
<feature type="transmembrane region" description="Helical; Name=5" evidence="3">
    <location>
        <begin position="192"/>
        <end position="212"/>
    </location>
</feature>
<feature type="topological domain" description="Cytoplasmic" evidence="3">
    <location>
        <begin position="213"/>
        <end position="232"/>
    </location>
</feature>
<feature type="transmembrane region" description="Helical; Name=6" evidence="3">
    <location>
        <begin position="233"/>
        <end position="253"/>
    </location>
</feature>
<feature type="topological domain" description="Extracellular" evidence="3">
    <location>
        <begin position="254"/>
        <end position="268"/>
    </location>
</feature>
<feature type="transmembrane region" description="Helical; Name=7" evidence="3">
    <location>
        <begin position="269"/>
        <end position="289"/>
    </location>
</feature>
<feature type="topological domain" description="Cytoplasmic" evidence="3">
    <location>
        <begin position="290"/>
        <end position="331"/>
    </location>
</feature>
<feature type="modified residue" description="Phosphoserine" evidence="2">
    <location>
        <position position="322"/>
    </location>
</feature>
<feature type="glycosylation site" description="N-linked (GlcNAc...) asparagine" evidence="3">
    <location>
        <position position="14"/>
    </location>
</feature>
<feature type="glycosylation site" description="N-linked (GlcNAc...) asparagine" evidence="3">
    <location>
        <position position="188"/>
    </location>
</feature>
<feature type="disulfide bond" evidence="4">
    <location>
        <begin position="94"/>
        <end position="172"/>
    </location>
</feature>
<evidence type="ECO:0000250" key="1">
    <source>
        <dbReference type="UniProtKB" id="Q14330"/>
    </source>
</evidence>
<evidence type="ECO:0000250" key="2">
    <source>
        <dbReference type="UniProtKB" id="Q8K1Z6"/>
    </source>
</evidence>
<evidence type="ECO:0000255" key="3"/>
<evidence type="ECO:0000255" key="4">
    <source>
        <dbReference type="PROSITE-ProRule" id="PRU00521"/>
    </source>
</evidence>
<evidence type="ECO:0000312" key="5">
    <source>
        <dbReference type="EMBL" id="BAE01462.1"/>
    </source>
</evidence>
<comment type="function">
    <text evidence="1 2">G protein-coupled receptor (GPCR) that plays a role in diverse physiological processes particularly within the immune and nervous systems. Becomes active when triggered by various endogenous ligands including endocannabinoid N-arachidonyl glycine (NAGly), delta-9-tetrahydrocannabinol or resolvin D2/RvD2 derived from the omega-3 fatty acid docosahexaenoic acid (DHA). Upon RvD2 binding, facilitates the resolution of inflammation, aiding in tissue repair and homeostasis. Mechanistically, RvD2 ligation initiates Galphas protein coupling, activation of cAMP-PKA signaling pathway and phosphorylation of STAT3, leading to RvD2-stimulated macrophage phagocytosis. Mediates NAGly-induced process of reorganization of actin filaments and induction of acrosomal exocytosis (By similarity). Activation by N-arachidonoyl glycine (NAGly) can also induce apoptosis in macrophages (By similarity). Plays a role in homeostasis of CD8+ subsets of intraepithelial lymphocytes (IELs) (CD8alphaalpha and CD8alphabeta IELs) in small intestine by supporting preferential migration of CD8alphaalpha T-cells to intraepithelial compartment over lamina propria compartment, and by mediating their reconstitution into small intestine after bone marrow transplant (By similarity). Participates also in hypotensive responses, mediating reduction in intraocular and blood pressure (By similarity).</text>
</comment>
<comment type="subcellular location">
    <subcellularLocation>
        <location evidence="1">Cell membrane</location>
        <topology evidence="3">Multi-pass membrane protein</topology>
    </subcellularLocation>
    <subcellularLocation>
        <location evidence="1">Cytoplasmic vesicle membrane</location>
    </subcellularLocation>
</comment>
<comment type="similarity">
    <text evidence="4">Belongs to the G-protein coupled receptor 1 family.</text>
</comment>
<reference evidence="5" key="1">
    <citation type="submission" date="2005-06" db="EMBL/GenBank/DDBJ databases">
        <title>DNA sequences of macaque genes expressed in brain or testis and its evolutionary implications.</title>
        <authorList>
            <consortium name="International consortium for macaque cDNA sequencing and analysis"/>
        </authorList>
    </citation>
    <scope>NUCLEOTIDE SEQUENCE [LARGE SCALE MRNA]</scope>
    <source>
        <tissue>Testis</tissue>
    </source>
</reference>
<sequence>MITLNNQDQPVPFNNSYPDEYEIAALVFYSCIFIIGLFVNITALWVFSCTTKKRTTVTIYMMNVALVDLIFIMTLPFRMFYYAKDEWPFGEYFCQILGALTVFYPSIALWLLAFISADRYMAIVQPKYAKELKNTCKAVLACVGVWIMTLTTTIPLLLLHKDPDKDSTPATCLKISDIVYLKAVNVLNFTRLTFFFLIPLFIMIGCYLVIIHNLLHGRTSKLKPKVKEKSIRIIITLLVQVLVCFMPFHICFAFLMLGTGENSYSPWGAFTTFLMNLSTCLDVILYYIVSKQFQARVISVMLYRNYLRGMRRKSFRSGSLRSLSNINSEML</sequence>
<accession>Q4R613</accession>